<name>GRPE1_BUCAI</name>
<comment type="function">
    <text evidence="1">Participates actively in the response to hyperosmotic and heat shock by preventing the aggregation of stress-denatured proteins, in association with DnaK and GrpE. It is the nucleotide exchange factor for DnaK and may function as a thermosensor. Unfolded proteins bind initially to DnaJ; upon interaction with the DnaJ-bound protein, DnaK hydrolyzes its bound ATP, resulting in the formation of a stable complex. GrpE releases ADP from DnaK; ATP binding to DnaK triggers the release of the substrate protein, thus completing the reaction cycle. Several rounds of ATP-dependent interactions between DnaJ, DnaK and GrpE are required for fully efficient folding.</text>
</comment>
<comment type="subunit">
    <text evidence="1">Homodimer.</text>
</comment>
<comment type="subcellular location">
    <subcellularLocation>
        <location evidence="1">Cytoplasm</location>
    </subcellularLocation>
</comment>
<comment type="similarity">
    <text evidence="1">Belongs to the GrpE family.</text>
</comment>
<dbReference type="EMBL" id="BA000003">
    <property type="protein sequence ID" value="BAB12962.1"/>
    <property type="molecule type" value="Genomic_DNA"/>
</dbReference>
<dbReference type="RefSeq" id="NP_240076.1">
    <property type="nucleotide sequence ID" value="NC_002528.1"/>
</dbReference>
<dbReference type="RefSeq" id="WP_010896026.1">
    <property type="nucleotide sequence ID" value="NC_002528.1"/>
</dbReference>
<dbReference type="SMR" id="P57340"/>
<dbReference type="STRING" id="563178.BUAP5A_247"/>
<dbReference type="EnsemblBacteria" id="BAB12962">
    <property type="protein sequence ID" value="BAB12962"/>
    <property type="gene ID" value="BAB12962"/>
</dbReference>
<dbReference type="KEGG" id="buc:BU252"/>
<dbReference type="PATRIC" id="fig|107806.10.peg.262"/>
<dbReference type="eggNOG" id="COG0576">
    <property type="taxonomic scope" value="Bacteria"/>
</dbReference>
<dbReference type="HOGENOM" id="CLU_057217_6_0_6"/>
<dbReference type="Proteomes" id="UP000001806">
    <property type="component" value="Chromosome"/>
</dbReference>
<dbReference type="GO" id="GO:0005737">
    <property type="term" value="C:cytoplasm"/>
    <property type="evidence" value="ECO:0007669"/>
    <property type="project" value="UniProtKB-SubCell"/>
</dbReference>
<dbReference type="GO" id="GO:0000774">
    <property type="term" value="F:adenyl-nucleotide exchange factor activity"/>
    <property type="evidence" value="ECO:0007669"/>
    <property type="project" value="InterPro"/>
</dbReference>
<dbReference type="GO" id="GO:0042803">
    <property type="term" value="F:protein homodimerization activity"/>
    <property type="evidence" value="ECO:0007669"/>
    <property type="project" value="InterPro"/>
</dbReference>
<dbReference type="GO" id="GO:0051087">
    <property type="term" value="F:protein-folding chaperone binding"/>
    <property type="evidence" value="ECO:0007669"/>
    <property type="project" value="InterPro"/>
</dbReference>
<dbReference type="GO" id="GO:0051082">
    <property type="term" value="F:unfolded protein binding"/>
    <property type="evidence" value="ECO:0007669"/>
    <property type="project" value="TreeGrafter"/>
</dbReference>
<dbReference type="GO" id="GO:0006457">
    <property type="term" value="P:protein folding"/>
    <property type="evidence" value="ECO:0007669"/>
    <property type="project" value="InterPro"/>
</dbReference>
<dbReference type="CDD" id="cd00446">
    <property type="entry name" value="GrpE"/>
    <property type="match status" value="1"/>
</dbReference>
<dbReference type="Gene3D" id="3.90.20.20">
    <property type="match status" value="1"/>
</dbReference>
<dbReference type="Gene3D" id="2.30.22.10">
    <property type="entry name" value="Head domain of nucleotide exchange factor GrpE"/>
    <property type="match status" value="1"/>
</dbReference>
<dbReference type="HAMAP" id="MF_01151">
    <property type="entry name" value="GrpE"/>
    <property type="match status" value="1"/>
</dbReference>
<dbReference type="InterPro" id="IPR000740">
    <property type="entry name" value="GrpE"/>
</dbReference>
<dbReference type="InterPro" id="IPR013805">
    <property type="entry name" value="GrpE_coiled_coil"/>
</dbReference>
<dbReference type="InterPro" id="IPR009012">
    <property type="entry name" value="GrpE_head"/>
</dbReference>
<dbReference type="PANTHER" id="PTHR21237">
    <property type="entry name" value="GRPE PROTEIN"/>
    <property type="match status" value="1"/>
</dbReference>
<dbReference type="PANTHER" id="PTHR21237:SF23">
    <property type="entry name" value="GRPE PROTEIN HOMOLOG, MITOCHONDRIAL"/>
    <property type="match status" value="1"/>
</dbReference>
<dbReference type="Pfam" id="PF01025">
    <property type="entry name" value="GrpE"/>
    <property type="match status" value="1"/>
</dbReference>
<dbReference type="PRINTS" id="PR00773">
    <property type="entry name" value="GRPEPROTEIN"/>
</dbReference>
<dbReference type="SUPFAM" id="SSF58014">
    <property type="entry name" value="Coiled-coil domain of nucleotide exchange factor GrpE"/>
    <property type="match status" value="1"/>
</dbReference>
<dbReference type="SUPFAM" id="SSF51064">
    <property type="entry name" value="Head domain of nucleotide exchange factor GrpE"/>
    <property type="match status" value="1"/>
</dbReference>
<dbReference type="PROSITE" id="PS01071">
    <property type="entry name" value="GRPE"/>
    <property type="match status" value="1"/>
</dbReference>
<sequence length="194" mass="23147">MIHNEEEQLEKKIEKNQDPKINHKKYDSDNLIKKNLIQFLEIQLKESEEKIIEKEEIVEKEIVLIHNRFNKEIEKSIKFSLEKIIIDFLPIIDNIERALNLIETINLKQEKYTEILKKLQFICNLLEKFFYLFNIKKINDTNVLFNPSIHQAMSIHYTNDIISNQIVTVMQSGYILHKSRLLRPAMVVVSKEKI</sequence>
<keyword id="KW-0143">Chaperone</keyword>
<keyword id="KW-0963">Cytoplasm</keyword>
<keyword id="KW-1185">Reference proteome</keyword>
<keyword id="KW-0346">Stress response</keyword>
<feature type="chain" id="PRO_0000113757" description="Protein GrpE 1">
    <location>
        <begin position="1"/>
        <end position="194"/>
    </location>
</feature>
<feature type="region of interest" description="Disordered" evidence="2">
    <location>
        <begin position="1"/>
        <end position="22"/>
    </location>
</feature>
<accession>P57340</accession>
<proteinExistence type="inferred from homology"/>
<reference key="1">
    <citation type="journal article" date="2000" name="Nature">
        <title>Genome sequence of the endocellular bacterial symbiont of aphids Buchnera sp. APS.</title>
        <authorList>
            <person name="Shigenobu S."/>
            <person name="Watanabe H."/>
            <person name="Hattori M."/>
            <person name="Sakaki Y."/>
            <person name="Ishikawa H."/>
        </authorList>
    </citation>
    <scope>NUCLEOTIDE SEQUENCE [LARGE SCALE GENOMIC DNA]</scope>
    <source>
        <strain>APS</strain>
    </source>
</reference>
<organism>
    <name type="scientific">Buchnera aphidicola subsp. Acyrthosiphon pisum (strain APS)</name>
    <name type="common">Acyrthosiphon pisum symbiotic bacterium</name>
    <dbReference type="NCBI Taxonomy" id="107806"/>
    <lineage>
        <taxon>Bacteria</taxon>
        <taxon>Pseudomonadati</taxon>
        <taxon>Pseudomonadota</taxon>
        <taxon>Gammaproteobacteria</taxon>
        <taxon>Enterobacterales</taxon>
        <taxon>Erwiniaceae</taxon>
        <taxon>Buchnera</taxon>
    </lineage>
</organism>
<protein>
    <recommendedName>
        <fullName evidence="1">Protein GrpE 1</fullName>
    </recommendedName>
    <alternativeName>
        <fullName evidence="1">HSP-70 cofactor 1</fullName>
    </alternativeName>
</protein>
<gene>
    <name evidence="1" type="primary">grpE1</name>
    <name type="ordered locus">BU252</name>
</gene>
<evidence type="ECO:0000255" key="1">
    <source>
        <dbReference type="HAMAP-Rule" id="MF_01151"/>
    </source>
</evidence>
<evidence type="ECO:0000256" key="2">
    <source>
        <dbReference type="SAM" id="MobiDB-lite"/>
    </source>
</evidence>